<feature type="chain" id="PRO_1000118439" description="3,4-dihydroxy-2-butanone 4-phosphate synthase">
    <location>
        <begin position="1"/>
        <end position="217"/>
    </location>
</feature>
<feature type="binding site" evidence="1">
    <location>
        <begin position="37"/>
        <end position="38"/>
    </location>
    <ligand>
        <name>D-ribulose 5-phosphate</name>
        <dbReference type="ChEBI" id="CHEBI:58121"/>
    </ligand>
</feature>
<feature type="binding site" evidence="1">
    <location>
        <position position="38"/>
    </location>
    <ligand>
        <name>Mg(2+)</name>
        <dbReference type="ChEBI" id="CHEBI:18420"/>
        <label>1</label>
    </ligand>
</feature>
<feature type="binding site" evidence="1">
    <location>
        <position position="38"/>
    </location>
    <ligand>
        <name>Mg(2+)</name>
        <dbReference type="ChEBI" id="CHEBI:18420"/>
        <label>2</label>
    </ligand>
</feature>
<feature type="binding site" evidence="1">
    <location>
        <position position="42"/>
    </location>
    <ligand>
        <name>D-ribulose 5-phosphate</name>
        <dbReference type="ChEBI" id="CHEBI:58121"/>
    </ligand>
</feature>
<feature type="binding site" evidence="1">
    <location>
        <begin position="150"/>
        <end position="154"/>
    </location>
    <ligand>
        <name>D-ribulose 5-phosphate</name>
        <dbReference type="ChEBI" id="CHEBI:58121"/>
    </ligand>
</feature>
<feature type="binding site" evidence="1">
    <location>
        <position position="153"/>
    </location>
    <ligand>
        <name>Mg(2+)</name>
        <dbReference type="ChEBI" id="CHEBI:18420"/>
        <label>2</label>
    </ligand>
</feature>
<feature type="binding site" evidence="1">
    <location>
        <position position="174"/>
    </location>
    <ligand>
        <name>D-ribulose 5-phosphate</name>
        <dbReference type="ChEBI" id="CHEBI:58121"/>
    </ligand>
</feature>
<feature type="site" description="Essential for catalytic activity" evidence="1">
    <location>
        <position position="136"/>
    </location>
</feature>
<feature type="site" description="Essential for catalytic activity" evidence="1">
    <location>
        <position position="174"/>
    </location>
</feature>
<accession>B1LF38</accession>
<reference key="1">
    <citation type="journal article" date="2008" name="J. Bacteriol.">
        <title>Insights into the environmental resistance gene pool from the genome sequence of the multidrug-resistant environmental isolate Escherichia coli SMS-3-5.</title>
        <authorList>
            <person name="Fricke W.F."/>
            <person name="Wright M.S."/>
            <person name="Lindell A.H."/>
            <person name="Harkins D.M."/>
            <person name="Baker-Austin C."/>
            <person name="Ravel J."/>
            <person name="Stepanauskas R."/>
        </authorList>
    </citation>
    <scope>NUCLEOTIDE SEQUENCE [LARGE SCALE GENOMIC DNA]</scope>
    <source>
        <strain>SMS-3-5 / SECEC</strain>
    </source>
</reference>
<gene>
    <name evidence="1" type="primary">ribB</name>
    <name type="ordered locus">EcSMS35_3339</name>
</gene>
<keyword id="KW-0456">Lyase</keyword>
<keyword id="KW-0460">Magnesium</keyword>
<keyword id="KW-0464">Manganese</keyword>
<keyword id="KW-0479">Metal-binding</keyword>
<keyword id="KW-0686">Riboflavin biosynthesis</keyword>
<protein>
    <recommendedName>
        <fullName evidence="1">3,4-dihydroxy-2-butanone 4-phosphate synthase</fullName>
        <shortName evidence="1">DHBP synthase</shortName>
        <ecNumber evidence="1">4.1.99.12</ecNumber>
    </recommendedName>
</protein>
<comment type="function">
    <text evidence="1">Catalyzes the conversion of D-ribulose 5-phosphate to formate and 3,4-dihydroxy-2-butanone 4-phosphate.</text>
</comment>
<comment type="catalytic activity">
    <reaction evidence="1">
        <text>D-ribulose 5-phosphate = (2S)-2-hydroxy-3-oxobutyl phosphate + formate + H(+)</text>
        <dbReference type="Rhea" id="RHEA:18457"/>
        <dbReference type="ChEBI" id="CHEBI:15378"/>
        <dbReference type="ChEBI" id="CHEBI:15740"/>
        <dbReference type="ChEBI" id="CHEBI:58121"/>
        <dbReference type="ChEBI" id="CHEBI:58830"/>
        <dbReference type="EC" id="4.1.99.12"/>
    </reaction>
</comment>
<comment type="cofactor">
    <cofactor evidence="1">
        <name>Mg(2+)</name>
        <dbReference type="ChEBI" id="CHEBI:18420"/>
    </cofactor>
    <cofactor evidence="1">
        <name>Mn(2+)</name>
        <dbReference type="ChEBI" id="CHEBI:29035"/>
    </cofactor>
    <text evidence="1">Binds 2 divalent metal cations per subunit. Magnesium or manganese.</text>
</comment>
<comment type="pathway">
    <text evidence="1">Cofactor biosynthesis; riboflavin biosynthesis; 2-hydroxy-3-oxobutyl phosphate from D-ribulose 5-phosphate: step 1/1.</text>
</comment>
<comment type="subunit">
    <text evidence="1">Homodimer.</text>
</comment>
<comment type="similarity">
    <text evidence="1">Belongs to the DHBP synthase family.</text>
</comment>
<evidence type="ECO:0000255" key="1">
    <source>
        <dbReference type="HAMAP-Rule" id="MF_00180"/>
    </source>
</evidence>
<dbReference type="EC" id="4.1.99.12" evidence="1"/>
<dbReference type="EMBL" id="CP000970">
    <property type="protein sequence ID" value="ACB19864.1"/>
    <property type="molecule type" value="Genomic_DNA"/>
</dbReference>
<dbReference type="RefSeq" id="WP_001076993.1">
    <property type="nucleotide sequence ID" value="NC_010498.1"/>
</dbReference>
<dbReference type="SMR" id="B1LF38"/>
<dbReference type="KEGG" id="ecm:EcSMS35_3339"/>
<dbReference type="HOGENOM" id="CLU_020273_3_0_6"/>
<dbReference type="UniPathway" id="UPA00275">
    <property type="reaction ID" value="UER00399"/>
</dbReference>
<dbReference type="Proteomes" id="UP000007011">
    <property type="component" value="Chromosome"/>
</dbReference>
<dbReference type="GO" id="GO:0005829">
    <property type="term" value="C:cytosol"/>
    <property type="evidence" value="ECO:0007669"/>
    <property type="project" value="TreeGrafter"/>
</dbReference>
<dbReference type="GO" id="GO:0008686">
    <property type="term" value="F:3,4-dihydroxy-2-butanone-4-phosphate synthase activity"/>
    <property type="evidence" value="ECO:0007669"/>
    <property type="project" value="UniProtKB-UniRule"/>
</dbReference>
<dbReference type="GO" id="GO:0000287">
    <property type="term" value="F:magnesium ion binding"/>
    <property type="evidence" value="ECO:0007669"/>
    <property type="project" value="UniProtKB-UniRule"/>
</dbReference>
<dbReference type="GO" id="GO:0030145">
    <property type="term" value="F:manganese ion binding"/>
    <property type="evidence" value="ECO:0007669"/>
    <property type="project" value="UniProtKB-UniRule"/>
</dbReference>
<dbReference type="GO" id="GO:0009231">
    <property type="term" value="P:riboflavin biosynthetic process"/>
    <property type="evidence" value="ECO:0007669"/>
    <property type="project" value="UniProtKB-UniRule"/>
</dbReference>
<dbReference type="FunFam" id="3.90.870.10:FF:000002">
    <property type="entry name" value="3,4-dihydroxy-2-butanone 4-phosphate synthase"/>
    <property type="match status" value="1"/>
</dbReference>
<dbReference type="Gene3D" id="3.90.870.10">
    <property type="entry name" value="DHBP synthase"/>
    <property type="match status" value="1"/>
</dbReference>
<dbReference type="HAMAP" id="MF_00180">
    <property type="entry name" value="RibB"/>
    <property type="match status" value="1"/>
</dbReference>
<dbReference type="InterPro" id="IPR017945">
    <property type="entry name" value="DHBP_synth_RibB-like_a/b_dom"/>
</dbReference>
<dbReference type="InterPro" id="IPR000422">
    <property type="entry name" value="DHBP_synthase_RibB"/>
</dbReference>
<dbReference type="NCBIfam" id="TIGR00506">
    <property type="entry name" value="ribB"/>
    <property type="match status" value="1"/>
</dbReference>
<dbReference type="PANTHER" id="PTHR21327:SF38">
    <property type="entry name" value="3,4-DIHYDROXY-2-BUTANONE 4-PHOSPHATE SYNTHASE"/>
    <property type="match status" value="1"/>
</dbReference>
<dbReference type="PANTHER" id="PTHR21327">
    <property type="entry name" value="GTP CYCLOHYDROLASE II-RELATED"/>
    <property type="match status" value="1"/>
</dbReference>
<dbReference type="Pfam" id="PF00926">
    <property type="entry name" value="DHBP_synthase"/>
    <property type="match status" value="1"/>
</dbReference>
<dbReference type="SUPFAM" id="SSF55821">
    <property type="entry name" value="YrdC/RibB"/>
    <property type="match status" value="1"/>
</dbReference>
<proteinExistence type="inferred from homology"/>
<organism>
    <name type="scientific">Escherichia coli (strain SMS-3-5 / SECEC)</name>
    <dbReference type="NCBI Taxonomy" id="439855"/>
    <lineage>
        <taxon>Bacteria</taxon>
        <taxon>Pseudomonadati</taxon>
        <taxon>Pseudomonadota</taxon>
        <taxon>Gammaproteobacteria</taxon>
        <taxon>Enterobacterales</taxon>
        <taxon>Enterobacteriaceae</taxon>
        <taxon>Escherichia</taxon>
    </lineage>
</organism>
<sequence length="217" mass="23412">MNQTLLSSFGTPFERVENALAALREGRGVMVLDDEDRENEGDMIFPAETMTVEQMALTIRHGSGIVCLCITEDRRKQLDLPMMVENNTSAYGTGFTVTIEAAEGVTTGVSAADRITTVRAAIADDAKPSDLNRPGHVFPLRAQAGGVLTRGGHTEATIDLMTLAGFKPAGVLCELTNDDGTMARAPECIEFANKHNMALVTIEDLVAYRQAHERKAS</sequence>
<name>RIBB_ECOSM</name>